<reference key="1">
    <citation type="journal article" date="2007" name="BMC Microbiol.">
        <title>Subtle genetic changes enhance virulence of methicillin resistant and sensitive Staphylococcus aureus.</title>
        <authorList>
            <person name="Highlander S.K."/>
            <person name="Hulten K.G."/>
            <person name="Qin X."/>
            <person name="Jiang H."/>
            <person name="Yerrapragada S."/>
            <person name="Mason E.O. Jr."/>
            <person name="Shang Y."/>
            <person name="Williams T.M."/>
            <person name="Fortunov R.M."/>
            <person name="Liu Y."/>
            <person name="Igboeli O."/>
            <person name="Petrosino J."/>
            <person name="Tirumalai M."/>
            <person name="Uzman A."/>
            <person name="Fox G.E."/>
            <person name="Cardenas A.M."/>
            <person name="Muzny D.M."/>
            <person name="Hemphill L."/>
            <person name="Ding Y."/>
            <person name="Dugan S."/>
            <person name="Blyth P.R."/>
            <person name="Buhay C.J."/>
            <person name="Dinh H.H."/>
            <person name="Hawes A.C."/>
            <person name="Holder M."/>
            <person name="Kovar C.L."/>
            <person name="Lee S.L."/>
            <person name="Liu W."/>
            <person name="Nazareth L.V."/>
            <person name="Wang Q."/>
            <person name="Zhou J."/>
            <person name="Kaplan S.L."/>
            <person name="Weinstock G.M."/>
        </authorList>
    </citation>
    <scope>NUCLEOTIDE SEQUENCE [LARGE SCALE GENOMIC DNA]</scope>
    <source>
        <strain>USA300 / TCH1516</strain>
    </source>
</reference>
<comment type="function">
    <text evidence="1">Catalyzes the reductive methylation of 2'-deoxyuridine-5'-monophosphate (dUMP) to 2'-deoxythymidine-5'-monophosphate (dTMP) while utilizing 5,10-methylenetetrahydrofolate (mTHF) as the methyl donor and reductant in the reaction, yielding dihydrofolate (DHF) as a by-product. This enzymatic reaction provides an intracellular de novo source of dTMP, an essential precursor for DNA biosynthesis.</text>
</comment>
<comment type="catalytic activity">
    <reaction evidence="1">
        <text>dUMP + (6R)-5,10-methylene-5,6,7,8-tetrahydrofolate = 7,8-dihydrofolate + dTMP</text>
        <dbReference type="Rhea" id="RHEA:12104"/>
        <dbReference type="ChEBI" id="CHEBI:15636"/>
        <dbReference type="ChEBI" id="CHEBI:57451"/>
        <dbReference type="ChEBI" id="CHEBI:63528"/>
        <dbReference type="ChEBI" id="CHEBI:246422"/>
        <dbReference type="EC" id="2.1.1.45"/>
    </reaction>
</comment>
<comment type="pathway">
    <text evidence="1">Pyrimidine metabolism; dTTP biosynthesis.</text>
</comment>
<comment type="subunit">
    <text evidence="1">Homodimer.</text>
</comment>
<comment type="subcellular location">
    <subcellularLocation>
        <location evidence="1">Cytoplasm</location>
    </subcellularLocation>
</comment>
<comment type="similarity">
    <text evidence="1">Belongs to the thymidylate synthase family. Bacterial-type ThyA subfamily.</text>
</comment>
<organism>
    <name type="scientific">Staphylococcus aureus (strain USA300 / TCH1516)</name>
    <dbReference type="NCBI Taxonomy" id="451516"/>
    <lineage>
        <taxon>Bacteria</taxon>
        <taxon>Bacillati</taxon>
        <taxon>Bacillota</taxon>
        <taxon>Bacilli</taxon>
        <taxon>Bacillales</taxon>
        <taxon>Staphylococcaceae</taxon>
        <taxon>Staphylococcus</taxon>
    </lineage>
</organism>
<protein>
    <recommendedName>
        <fullName evidence="1">Thymidylate synthase</fullName>
        <shortName evidence="1">TS</shortName>
        <shortName evidence="1">TSase</shortName>
        <ecNumber evidence="1">2.1.1.45</ecNumber>
    </recommendedName>
</protein>
<name>TYSY_STAAT</name>
<evidence type="ECO:0000255" key="1">
    <source>
        <dbReference type="HAMAP-Rule" id="MF_00008"/>
    </source>
</evidence>
<keyword id="KW-0963">Cytoplasm</keyword>
<keyword id="KW-0489">Methyltransferase</keyword>
<keyword id="KW-0545">Nucleotide biosynthesis</keyword>
<keyword id="KW-0808">Transferase</keyword>
<sequence>MLNSFDAAYHSLCEEVLEIGNTRNDRTNTGTISKFGHQLRFDLSKGFPLLTTKKVSFKLVATELLWFIKGDTNIQYLLKYNNNIWNEWAFENYIKSDEYKGPDMTDFGHRALSDPEFNEQYKEQMKQFKQRILEDDTFAKQFGDLGNVYGKQWRDWVDKDGNHFDQLKTVIEQIKHNPDSRRHIVSAWNPTEIDTMALPPCHTMFQFYVQDGKLSCQLYQRSADIFLGVPFNIASYALLTHLIAKECGLEVGEFVHTFGDAHIYSNHIDAIQTQLARESFNPPTLKINSDKSIFDINYEDLEIVDYESHPAIKAPIAV</sequence>
<gene>
    <name evidence="1" type="primary">thyA</name>
    <name type="ordered locus">USA300HOU_1364</name>
</gene>
<feature type="chain" id="PRO_1000073889" description="Thymidylate synthase">
    <location>
        <begin position="1"/>
        <end position="318"/>
    </location>
</feature>
<feature type="active site" description="Nucleophile" evidence="1">
    <location>
        <position position="201"/>
    </location>
</feature>
<feature type="binding site" description="in other chain" evidence="1">
    <location>
        <position position="26"/>
    </location>
    <ligand>
        <name>dUMP</name>
        <dbReference type="ChEBI" id="CHEBI:246422"/>
        <note>ligand shared between dimeric partners</note>
    </ligand>
</feature>
<feature type="binding site" evidence="1">
    <location>
        <begin position="181"/>
        <end position="182"/>
    </location>
    <ligand>
        <name>dUMP</name>
        <dbReference type="ChEBI" id="CHEBI:246422"/>
        <note>ligand shared between dimeric partners</note>
    </ligand>
</feature>
<feature type="binding site" description="in other chain" evidence="1">
    <location>
        <begin position="221"/>
        <end position="224"/>
    </location>
    <ligand>
        <name>dUMP</name>
        <dbReference type="ChEBI" id="CHEBI:246422"/>
        <note>ligand shared between dimeric partners</note>
    </ligand>
</feature>
<feature type="binding site" evidence="1">
    <location>
        <position position="224"/>
    </location>
    <ligand>
        <name>(6R)-5,10-methylene-5,6,7,8-tetrahydrofolate</name>
        <dbReference type="ChEBI" id="CHEBI:15636"/>
    </ligand>
</feature>
<feature type="binding site" description="in other chain" evidence="1">
    <location>
        <position position="232"/>
    </location>
    <ligand>
        <name>dUMP</name>
        <dbReference type="ChEBI" id="CHEBI:246422"/>
        <note>ligand shared between dimeric partners</note>
    </ligand>
</feature>
<feature type="binding site" description="in other chain" evidence="1">
    <location>
        <begin position="262"/>
        <end position="264"/>
    </location>
    <ligand>
        <name>dUMP</name>
        <dbReference type="ChEBI" id="CHEBI:246422"/>
        <note>ligand shared between dimeric partners</note>
    </ligand>
</feature>
<feature type="binding site" evidence="1">
    <location>
        <position position="317"/>
    </location>
    <ligand>
        <name>(6R)-5,10-methylene-5,6,7,8-tetrahydrofolate</name>
        <dbReference type="ChEBI" id="CHEBI:15636"/>
    </ligand>
</feature>
<dbReference type="EC" id="2.1.1.45" evidence="1"/>
<dbReference type="EMBL" id="CP000730">
    <property type="protein sequence ID" value="ABX29374.1"/>
    <property type="molecule type" value="Genomic_DNA"/>
</dbReference>
<dbReference type="RefSeq" id="WP_000934885.1">
    <property type="nucleotide sequence ID" value="NC_010079.1"/>
</dbReference>
<dbReference type="SMR" id="A8Z406"/>
<dbReference type="KEGG" id="sax:USA300HOU_1364"/>
<dbReference type="HOGENOM" id="CLU_021669_0_2_9"/>
<dbReference type="UniPathway" id="UPA00575"/>
<dbReference type="GO" id="GO:0005829">
    <property type="term" value="C:cytosol"/>
    <property type="evidence" value="ECO:0007669"/>
    <property type="project" value="TreeGrafter"/>
</dbReference>
<dbReference type="GO" id="GO:0004799">
    <property type="term" value="F:thymidylate synthase activity"/>
    <property type="evidence" value="ECO:0007669"/>
    <property type="project" value="UniProtKB-UniRule"/>
</dbReference>
<dbReference type="GO" id="GO:0006231">
    <property type="term" value="P:dTMP biosynthetic process"/>
    <property type="evidence" value="ECO:0007669"/>
    <property type="project" value="UniProtKB-UniRule"/>
</dbReference>
<dbReference type="GO" id="GO:0006235">
    <property type="term" value="P:dTTP biosynthetic process"/>
    <property type="evidence" value="ECO:0007669"/>
    <property type="project" value="UniProtKB-UniRule"/>
</dbReference>
<dbReference type="GO" id="GO:0032259">
    <property type="term" value="P:methylation"/>
    <property type="evidence" value="ECO:0007669"/>
    <property type="project" value="UniProtKB-KW"/>
</dbReference>
<dbReference type="CDD" id="cd00351">
    <property type="entry name" value="TS_Pyrimidine_HMase"/>
    <property type="match status" value="1"/>
</dbReference>
<dbReference type="Gene3D" id="3.30.572.10">
    <property type="entry name" value="Thymidylate synthase/dCMP hydroxymethylase domain"/>
    <property type="match status" value="1"/>
</dbReference>
<dbReference type="HAMAP" id="MF_00008">
    <property type="entry name" value="Thymidy_synth_bact"/>
    <property type="match status" value="1"/>
</dbReference>
<dbReference type="InterPro" id="IPR045097">
    <property type="entry name" value="Thymidate_synth/dCMP_Mease"/>
</dbReference>
<dbReference type="InterPro" id="IPR023451">
    <property type="entry name" value="Thymidate_synth/dCMP_Mease_dom"/>
</dbReference>
<dbReference type="InterPro" id="IPR036926">
    <property type="entry name" value="Thymidate_synth/dCMP_Mease_sf"/>
</dbReference>
<dbReference type="InterPro" id="IPR000398">
    <property type="entry name" value="Thymidylate_synthase"/>
</dbReference>
<dbReference type="InterPro" id="IPR020940">
    <property type="entry name" value="Thymidylate_synthase_AS"/>
</dbReference>
<dbReference type="NCBIfam" id="NF002496">
    <property type="entry name" value="PRK01827.1-2"/>
    <property type="match status" value="1"/>
</dbReference>
<dbReference type="NCBIfam" id="TIGR03284">
    <property type="entry name" value="thym_sym"/>
    <property type="match status" value="1"/>
</dbReference>
<dbReference type="PANTHER" id="PTHR11548:SF9">
    <property type="entry name" value="THYMIDYLATE SYNTHASE"/>
    <property type="match status" value="1"/>
</dbReference>
<dbReference type="PANTHER" id="PTHR11548">
    <property type="entry name" value="THYMIDYLATE SYNTHASE 1"/>
    <property type="match status" value="1"/>
</dbReference>
<dbReference type="Pfam" id="PF00303">
    <property type="entry name" value="Thymidylat_synt"/>
    <property type="match status" value="1"/>
</dbReference>
<dbReference type="PRINTS" id="PR00108">
    <property type="entry name" value="THYMDSNTHASE"/>
</dbReference>
<dbReference type="SUPFAM" id="SSF55831">
    <property type="entry name" value="Thymidylate synthase/dCMP hydroxymethylase"/>
    <property type="match status" value="1"/>
</dbReference>
<dbReference type="PROSITE" id="PS00091">
    <property type="entry name" value="THYMIDYLATE_SYNTHASE"/>
    <property type="match status" value="1"/>
</dbReference>
<accession>A8Z406</accession>
<proteinExistence type="inferred from homology"/>